<protein>
    <recommendedName>
        <fullName>Myricetin 3-O-rhamnoside 1,2-glucosyltransferase UGT709G2</fullName>
        <ecNumber evidence="3">2.4.1.-</ecNumber>
    </recommendedName>
    <alternativeName>
        <fullName evidence="6">UDP-glucosyltransferase 2</fullName>
        <shortName evidence="6">CcUGT2</shortName>
    </alternativeName>
</protein>
<proteinExistence type="evidence at protein level"/>
<comment type="function">
    <text evidence="3 4">Glucosyltransferase involved in montbretin A (MbA) biosynthesis (PubMed:29967287, PubMed:31004005). Catalyzes the glucosylation of myricetin 3-O-alpha-L-rhamnoside (MR) to produce myricetin 3-O-[beta-D-glucosyl-(1-&gt;2)-alpha-L-rhamnoside] (MRG), a precursor of MbA (PubMed:29967287, PubMed:31004005). MbA is a potent inhibitor of human pancreatic alpha-amylase and is being developed as drug candidate to treat type-2 diabetes (PubMed:29967287, PubMed:31004005). In vitro, is able to transfer UDP-xylose with 50-fold less efficiency compared with UDP-glucose (PubMed:29967287). In vitro, can use myricetin 3-O-glucoside and quercetin 3-O-glucoside as substrates, although these two flavonoids may not be physiological substrates in vivo (PubMed:29967287).</text>
</comment>
<comment type="catalytic activity">
    <reaction evidence="3 4">
        <text>myricetin 3-O-alpha-L-rhamnoside + UDP-alpha-D-glucose = myricetin 3-O-[beta-D-glucosyl-(1-&gt;2)-alpha-L-rhamnoside] + UDP + H(+)</text>
        <dbReference type="Rhea" id="RHEA:61148"/>
        <dbReference type="ChEBI" id="CHEBI:15378"/>
        <dbReference type="ChEBI" id="CHEBI:58223"/>
        <dbReference type="ChEBI" id="CHEBI:58885"/>
        <dbReference type="ChEBI" id="CHEBI:144429"/>
        <dbReference type="ChEBI" id="CHEBI:144432"/>
    </reaction>
    <physiologicalReaction direction="left-to-right" evidence="3 4">
        <dbReference type="Rhea" id="RHEA:61149"/>
    </physiologicalReaction>
</comment>
<comment type="pathway">
    <text evidence="7">Flavonoid metabolism.</text>
</comment>
<comment type="tissue specificity">
    <text evidence="3">Expressed in young cromes.</text>
</comment>
<comment type="similarity">
    <text evidence="7">Belongs to the UDP-glycosyltransferase family.</text>
</comment>
<organism>
    <name type="scientific">Crocosmia x crocosmiiflora</name>
    <name type="common">Montbretia</name>
    <name type="synonym">Crocosmia aurea x Crocosmia pottsii</name>
    <dbReference type="NCBI Taxonomy" id="1053288"/>
    <lineage>
        <taxon>Eukaryota</taxon>
        <taxon>Viridiplantae</taxon>
        <taxon>Streptophyta</taxon>
        <taxon>Embryophyta</taxon>
        <taxon>Tracheophyta</taxon>
        <taxon>Spermatophyta</taxon>
        <taxon>Magnoliopsida</taxon>
        <taxon>Liliopsida</taxon>
        <taxon>Asparagales</taxon>
        <taxon>Iridaceae</taxon>
        <taxon>Crocoideae</taxon>
        <taxon>Freesieae</taxon>
        <taxon>Crocosmia</taxon>
    </lineage>
</organism>
<keyword id="KW-0328">Glycosyltransferase</keyword>
<keyword id="KW-0808">Transferase</keyword>
<accession>A0A2Z5CV93</accession>
<feature type="chain" id="PRO_0000448218" description="Myricetin 3-O-rhamnoside 1,2-glucosyltransferase UGT709G2">
    <location>
        <begin position="1"/>
        <end position="470"/>
    </location>
</feature>
<feature type="active site" description="Proton acceptor" evidence="1">
    <location>
        <position position="20"/>
    </location>
</feature>
<feature type="active site" description="Charge relay" evidence="1">
    <location>
        <position position="117"/>
    </location>
</feature>
<feature type="binding site" evidence="2">
    <location>
        <position position="20"/>
    </location>
    <ligand>
        <name>an anthocyanidin</name>
        <dbReference type="ChEBI" id="CHEBI:143576"/>
    </ligand>
</feature>
<feature type="binding site" evidence="1">
    <location>
        <position position="340"/>
    </location>
    <ligand>
        <name>UDP-alpha-D-glucose</name>
        <dbReference type="ChEBI" id="CHEBI:58885"/>
    </ligand>
</feature>
<feature type="binding site" evidence="1">
    <location>
        <position position="342"/>
    </location>
    <ligand>
        <name>UDP-alpha-D-glucose</name>
        <dbReference type="ChEBI" id="CHEBI:58885"/>
    </ligand>
</feature>
<feature type="binding site" evidence="1">
    <location>
        <position position="357"/>
    </location>
    <ligand>
        <name>UDP-alpha-D-glucose</name>
        <dbReference type="ChEBI" id="CHEBI:58885"/>
    </ligand>
</feature>
<feature type="binding site" evidence="1">
    <location>
        <position position="360"/>
    </location>
    <ligand>
        <name>UDP-alpha-D-glucose</name>
        <dbReference type="ChEBI" id="CHEBI:58885"/>
    </ligand>
</feature>
<feature type="binding site" evidence="1">
    <location>
        <position position="361"/>
    </location>
    <ligand>
        <name>UDP-alpha-D-glucose</name>
        <dbReference type="ChEBI" id="CHEBI:58885"/>
    </ligand>
</feature>
<feature type="binding site" evidence="1">
    <location>
        <position position="362"/>
    </location>
    <ligand>
        <name>UDP-alpha-D-glucose</name>
        <dbReference type="ChEBI" id="CHEBI:58885"/>
    </ligand>
</feature>
<feature type="binding site" evidence="1">
    <location>
        <position position="365"/>
    </location>
    <ligand>
        <name>UDP-alpha-D-glucose</name>
        <dbReference type="ChEBI" id="CHEBI:58885"/>
    </ligand>
</feature>
<feature type="binding site" evidence="2">
    <location>
        <position position="380"/>
    </location>
    <ligand>
        <name>an anthocyanidin</name>
        <dbReference type="ChEBI" id="CHEBI:143576"/>
    </ligand>
</feature>
<feature type="binding site" evidence="1">
    <location>
        <position position="381"/>
    </location>
    <ligand>
        <name>UDP-alpha-D-glucose</name>
        <dbReference type="ChEBI" id="CHEBI:58885"/>
    </ligand>
</feature>
<feature type="binding site" evidence="1">
    <location>
        <position position="382"/>
    </location>
    <ligand>
        <name>UDP-alpha-D-glucose</name>
        <dbReference type="ChEBI" id="CHEBI:58885"/>
    </ligand>
</feature>
<name>U70G2_CROXC</name>
<sequence length="470" mass="52699">MAEKEAKHHVVLFPLPGQGHIGSMLKLAQLLSTAGFYITFVHTERNYRRFLLTSTSFNVPKFRFRTIPDGFPDNDPRSPLPFIELQESLDTKCKGYYREVLVAVDEEWPPVTCVVADTALPLALEVPEELGIPVMILAPHSAGSILTGYSIPQLIQGGEFPFPEDADMDELLQGVLGLEGIVRRRDMSVRGFKSIDSPFVRFEVKMNQNLSRGRALILNTTESMDSLALRHIRSICPTTYTLGPFHVLLRNIKDQSHSASLSEEDRSCIAWLDTKPNKSVVYVSFGSLAAMSREAFLEFQQGLLDSGYHFLWVIRPDMVEGGLEECELTASERRYFVKWAPQEEVLAHPAVGCFLTHSGWNSTLESIYAGVPMICWPFFADQLINSRFVSEVWKIALDMKDLCGRSYVERMVKEVMSGEKGKELRKSICEMADMVKKSAEEGGSSYTNFKELIGHIKSLSLPACSSTSGF</sequence>
<reference key="1">
    <citation type="journal article" date="2018" name="Plant Cell">
        <title>Discovery of UDP-glycosyltransferases and BAHD-acyltransferases involved in the biosynthesis of the antidiabetic plant metabolite montbretin A.</title>
        <authorList>
            <person name="Irmisch S."/>
            <person name="Jo S."/>
            <person name="Roach C.R."/>
            <person name="Jancsik S."/>
            <person name="Man Saint Yuen M."/>
            <person name="Madilao L.L."/>
            <person name="O'Neil-Johnson M."/>
            <person name="Williams R."/>
            <person name="Withers S.G."/>
            <person name="Bohlmann J."/>
        </authorList>
    </citation>
    <scope>NUCLEOTIDE SEQUENCE [MRNA]</scope>
    <scope>FUNCTION</scope>
    <scope>CATALYTIC ACTIVITY</scope>
    <scope>TISSUE SPECIFICITY</scope>
</reference>
<reference key="2">
    <citation type="journal article" date="2019" name="Plant Physiol.">
        <title>Flavonol biosynthesis genes and their use in engineering the plant antidiabetic metabolite montbretin A.</title>
        <authorList>
            <person name="Irmisch S."/>
            <person name="Ruebsam H."/>
            <person name="Jancsik S."/>
            <person name="Man Saint Yuen M."/>
            <person name="Madilao L.L."/>
            <person name="Bohlmann J."/>
        </authorList>
    </citation>
    <scope>FUNCTION</scope>
    <scope>CATALYTIC ACTIVITY</scope>
</reference>
<gene>
    <name evidence="5" type="primary">UGT709G2</name>
    <name evidence="6" type="synonym">UGT2</name>
</gene>
<dbReference type="EC" id="2.4.1.-" evidence="3"/>
<dbReference type="EMBL" id="MG938543">
    <property type="protein sequence ID" value="AXB26716.1"/>
    <property type="molecule type" value="mRNA"/>
</dbReference>
<dbReference type="SMR" id="A0A2Z5CV93"/>
<dbReference type="GO" id="GO:0080043">
    <property type="term" value="F:quercetin 3-O-glucosyltransferase activity"/>
    <property type="evidence" value="ECO:0007669"/>
    <property type="project" value="TreeGrafter"/>
</dbReference>
<dbReference type="GO" id="GO:0080044">
    <property type="term" value="F:quercetin 7-O-glucosyltransferase activity"/>
    <property type="evidence" value="ECO:0007669"/>
    <property type="project" value="TreeGrafter"/>
</dbReference>
<dbReference type="CDD" id="cd03784">
    <property type="entry name" value="GT1_Gtf-like"/>
    <property type="match status" value="1"/>
</dbReference>
<dbReference type="FunFam" id="3.40.50.2000:FF:000040">
    <property type="entry name" value="UDP-glycosyltransferase 76C1"/>
    <property type="match status" value="1"/>
</dbReference>
<dbReference type="Gene3D" id="3.40.50.2000">
    <property type="entry name" value="Glycogen Phosphorylase B"/>
    <property type="match status" value="2"/>
</dbReference>
<dbReference type="InterPro" id="IPR002213">
    <property type="entry name" value="UDP_glucos_trans"/>
</dbReference>
<dbReference type="InterPro" id="IPR035595">
    <property type="entry name" value="UDP_glycos_trans_CS"/>
</dbReference>
<dbReference type="PANTHER" id="PTHR11926">
    <property type="entry name" value="GLUCOSYL/GLUCURONOSYL TRANSFERASES"/>
    <property type="match status" value="1"/>
</dbReference>
<dbReference type="PANTHER" id="PTHR11926:SF1392">
    <property type="entry name" value="GLYCOSYLTRANSFERASE"/>
    <property type="match status" value="1"/>
</dbReference>
<dbReference type="Pfam" id="PF00201">
    <property type="entry name" value="UDPGT"/>
    <property type="match status" value="1"/>
</dbReference>
<dbReference type="SUPFAM" id="SSF53756">
    <property type="entry name" value="UDP-Glycosyltransferase/glycogen phosphorylase"/>
    <property type="match status" value="1"/>
</dbReference>
<dbReference type="PROSITE" id="PS00375">
    <property type="entry name" value="UDPGT"/>
    <property type="match status" value="1"/>
</dbReference>
<evidence type="ECO:0000250" key="1">
    <source>
        <dbReference type="UniProtKB" id="A0A0A1HA03"/>
    </source>
</evidence>
<evidence type="ECO:0000250" key="2">
    <source>
        <dbReference type="UniProtKB" id="P51094"/>
    </source>
</evidence>
<evidence type="ECO:0000269" key="3">
    <source>
    </source>
</evidence>
<evidence type="ECO:0000269" key="4">
    <source>
    </source>
</evidence>
<evidence type="ECO:0000303" key="5">
    <source>
    </source>
</evidence>
<evidence type="ECO:0000303" key="6">
    <source>
    </source>
</evidence>
<evidence type="ECO:0000305" key="7"/>